<evidence type="ECO:0000255" key="1">
    <source>
        <dbReference type="HAMAP-Rule" id="MF_01351"/>
    </source>
</evidence>
<organism>
    <name type="scientific">Rickettsia prowazekii (strain Madrid E)</name>
    <dbReference type="NCBI Taxonomy" id="272947"/>
    <lineage>
        <taxon>Bacteria</taxon>
        <taxon>Pseudomonadati</taxon>
        <taxon>Pseudomonadota</taxon>
        <taxon>Alphaproteobacteria</taxon>
        <taxon>Rickettsiales</taxon>
        <taxon>Rickettsiaceae</taxon>
        <taxon>Rickettsieae</taxon>
        <taxon>Rickettsia</taxon>
        <taxon>typhus group</taxon>
    </lineage>
</organism>
<feature type="chain" id="PRO_0000118732" description="NADH-quinone oxidoreductase subunit I">
    <location>
        <begin position="1"/>
        <end position="159"/>
    </location>
</feature>
<feature type="domain" description="4Fe-4S ferredoxin-type 1" evidence="1">
    <location>
        <begin position="51"/>
        <end position="80"/>
    </location>
</feature>
<feature type="domain" description="4Fe-4S ferredoxin-type 2" evidence="1">
    <location>
        <begin position="90"/>
        <end position="119"/>
    </location>
</feature>
<feature type="binding site" evidence="1">
    <location>
        <position position="60"/>
    </location>
    <ligand>
        <name>[4Fe-4S] cluster</name>
        <dbReference type="ChEBI" id="CHEBI:49883"/>
        <label>1</label>
    </ligand>
</feature>
<feature type="binding site" evidence="1">
    <location>
        <position position="63"/>
    </location>
    <ligand>
        <name>[4Fe-4S] cluster</name>
        <dbReference type="ChEBI" id="CHEBI:49883"/>
        <label>1</label>
    </ligand>
</feature>
<feature type="binding site" evidence="1">
    <location>
        <position position="66"/>
    </location>
    <ligand>
        <name>[4Fe-4S] cluster</name>
        <dbReference type="ChEBI" id="CHEBI:49883"/>
        <label>1</label>
    </ligand>
</feature>
<feature type="binding site" evidence="1">
    <location>
        <position position="70"/>
    </location>
    <ligand>
        <name>[4Fe-4S] cluster</name>
        <dbReference type="ChEBI" id="CHEBI:49883"/>
        <label>2</label>
    </ligand>
</feature>
<feature type="binding site" evidence="1">
    <location>
        <position position="99"/>
    </location>
    <ligand>
        <name>[4Fe-4S] cluster</name>
        <dbReference type="ChEBI" id="CHEBI:49883"/>
        <label>2</label>
    </ligand>
</feature>
<feature type="binding site" evidence="1">
    <location>
        <position position="102"/>
    </location>
    <ligand>
        <name>[4Fe-4S] cluster</name>
        <dbReference type="ChEBI" id="CHEBI:49883"/>
        <label>2</label>
    </ligand>
</feature>
<feature type="binding site" evidence="1">
    <location>
        <position position="105"/>
    </location>
    <ligand>
        <name>[4Fe-4S] cluster</name>
        <dbReference type="ChEBI" id="CHEBI:49883"/>
        <label>2</label>
    </ligand>
</feature>
<feature type="binding site" evidence="1">
    <location>
        <position position="109"/>
    </location>
    <ligand>
        <name>[4Fe-4S] cluster</name>
        <dbReference type="ChEBI" id="CHEBI:49883"/>
        <label>1</label>
    </ligand>
</feature>
<protein>
    <recommendedName>
        <fullName evidence="1">NADH-quinone oxidoreductase subunit I</fullName>
        <ecNumber evidence="1">7.1.1.-</ecNumber>
    </recommendedName>
    <alternativeName>
        <fullName evidence="1">NADH dehydrogenase I subunit I</fullName>
    </alternativeName>
    <alternativeName>
        <fullName evidence="1">NDH-1 subunit I</fullName>
    </alternativeName>
</protein>
<name>NUOI_RICPR</name>
<keyword id="KW-0004">4Fe-4S</keyword>
<keyword id="KW-0997">Cell inner membrane</keyword>
<keyword id="KW-1003">Cell membrane</keyword>
<keyword id="KW-0408">Iron</keyword>
<keyword id="KW-0411">Iron-sulfur</keyword>
<keyword id="KW-0472">Membrane</keyword>
<keyword id="KW-0479">Metal-binding</keyword>
<keyword id="KW-0520">NAD</keyword>
<keyword id="KW-0874">Quinone</keyword>
<keyword id="KW-1185">Reference proteome</keyword>
<keyword id="KW-0677">Repeat</keyword>
<keyword id="KW-1278">Translocase</keyword>
<accession>Q9ZCF8</accession>
<comment type="function">
    <text evidence="1">NDH-1 shuttles electrons from NADH, via FMN and iron-sulfur (Fe-S) centers, to quinones in the respiratory chain. The immediate electron acceptor for the enzyme in this species is believed to be ubiquinone. Couples the redox reaction to proton translocation (for every two electrons transferred, four hydrogen ions are translocated across the cytoplasmic membrane), and thus conserves the redox energy in a proton gradient.</text>
</comment>
<comment type="catalytic activity">
    <reaction evidence="1">
        <text>a quinone + NADH + 5 H(+)(in) = a quinol + NAD(+) + 4 H(+)(out)</text>
        <dbReference type="Rhea" id="RHEA:57888"/>
        <dbReference type="ChEBI" id="CHEBI:15378"/>
        <dbReference type="ChEBI" id="CHEBI:24646"/>
        <dbReference type="ChEBI" id="CHEBI:57540"/>
        <dbReference type="ChEBI" id="CHEBI:57945"/>
        <dbReference type="ChEBI" id="CHEBI:132124"/>
    </reaction>
</comment>
<comment type="cofactor">
    <cofactor evidence="1">
        <name>[4Fe-4S] cluster</name>
        <dbReference type="ChEBI" id="CHEBI:49883"/>
    </cofactor>
    <text evidence="1">Binds 2 [4Fe-4S] clusters per subunit.</text>
</comment>
<comment type="subunit">
    <text evidence="1">NDH-1 is composed of 14 different subunits. Subunits NuoA, H, J, K, L, M, N constitute the membrane sector of the complex.</text>
</comment>
<comment type="subcellular location">
    <subcellularLocation>
        <location evidence="1">Cell inner membrane</location>
        <topology evidence="1">Peripheral membrane protein</topology>
    </subcellularLocation>
</comment>
<comment type="similarity">
    <text evidence="1">Belongs to the complex I 23 kDa subunit family.</text>
</comment>
<sequence length="159" mass="18587">MINYLKSFFLYEIIRGMTLTLKYFFKPKVTINYPYEKSPVSPRFKGEHALRRYENGEERCIACKLCEAICPAQAIVIESDERDDGSRRTTRYDIDMTKCIYCGLCQEACPVDAIVEGPNFEFASLTHTALIYDKERLLNNGDKWEQALANKLHKDYQYR</sequence>
<gene>
    <name evidence="1" type="primary">nuoI</name>
    <name type="ordered locus">RP795</name>
</gene>
<reference key="1">
    <citation type="journal article" date="1998" name="Nature">
        <title>The genome sequence of Rickettsia prowazekii and the origin of mitochondria.</title>
        <authorList>
            <person name="Andersson S.G.E."/>
            <person name="Zomorodipour A."/>
            <person name="Andersson J.O."/>
            <person name="Sicheritz-Ponten T."/>
            <person name="Alsmark U.C.M."/>
            <person name="Podowski R.M."/>
            <person name="Naeslund A.K."/>
            <person name="Eriksson A.-S."/>
            <person name="Winkler H.H."/>
            <person name="Kurland C.G."/>
        </authorList>
    </citation>
    <scope>NUCLEOTIDE SEQUENCE [LARGE SCALE GENOMIC DNA]</scope>
    <source>
        <strain>Madrid E</strain>
    </source>
</reference>
<dbReference type="EC" id="7.1.1.-" evidence="1"/>
<dbReference type="EMBL" id="AJ235273">
    <property type="protein sequence ID" value="CAA15221.1"/>
    <property type="molecule type" value="Genomic_DNA"/>
</dbReference>
<dbReference type="PIR" id="E71640">
    <property type="entry name" value="E71640"/>
</dbReference>
<dbReference type="RefSeq" id="NP_221145.1">
    <property type="nucleotide sequence ID" value="NC_000963.1"/>
</dbReference>
<dbReference type="RefSeq" id="WP_010886374.1">
    <property type="nucleotide sequence ID" value="NC_000963.1"/>
</dbReference>
<dbReference type="SMR" id="Q9ZCF8"/>
<dbReference type="STRING" id="272947.gene:17555864"/>
<dbReference type="EnsemblBacteria" id="CAA15221">
    <property type="protein sequence ID" value="CAA15221"/>
    <property type="gene ID" value="CAA15221"/>
</dbReference>
<dbReference type="GeneID" id="57569917"/>
<dbReference type="KEGG" id="rpr:RP795"/>
<dbReference type="PATRIC" id="fig|272947.5.peg.831"/>
<dbReference type="eggNOG" id="COG1143">
    <property type="taxonomic scope" value="Bacteria"/>
</dbReference>
<dbReference type="HOGENOM" id="CLU_067218_5_1_5"/>
<dbReference type="OrthoDB" id="9808559at2"/>
<dbReference type="Proteomes" id="UP000002480">
    <property type="component" value="Chromosome"/>
</dbReference>
<dbReference type="GO" id="GO:0005886">
    <property type="term" value="C:plasma membrane"/>
    <property type="evidence" value="ECO:0007669"/>
    <property type="project" value="UniProtKB-SubCell"/>
</dbReference>
<dbReference type="GO" id="GO:0051539">
    <property type="term" value="F:4 iron, 4 sulfur cluster binding"/>
    <property type="evidence" value="ECO:0007669"/>
    <property type="project" value="UniProtKB-KW"/>
</dbReference>
<dbReference type="GO" id="GO:0005506">
    <property type="term" value="F:iron ion binding"/>
    <property type="evidence" value="ECO:0007669"/>
    <property type="project" value="UniProtKB-UniRule"/>
</dbReference>
<dbReference type="GO" id="GO:0050136">
    <property type="term" value="F:NADH:ubiquinone reductase (non-electrogenic) activity"/>
    <property type="evidence" value="ECO:0007669"/>
    <property type="project" value="UniProtKB-UniRule"/>
</dbReference>
<dbReference type="GO" id="GO:0048038">
    <property type="term" value="F:quinone binding"/>
    <property type="evidence" value="ECO:0007669"/>
    <property type="project" value="UniProtKB-KW"/>
</dbReference>
<dbReference type="GO" id="GO:0009060">
    <property type="term" value="P:aerobic respiration"/>
    <property type="evidence" value="ECO:0007669"/>
    <property type="project" value="TreeGrafter"/>
</dbReference>
<dbReference type="FunFam" id="3.30.70.3270:FF:000001">
    <property type="entry name" value="NADH-quinone oxidoreductase subunit I 1"/>
    <property type="match status" value="1"/>
</dbReference>
<dbReference type="Gene3D" id="3.30.70.3270">
    <property type="match status" value="1"/>
</dbReference>
<dbReference type="HAMAP" id="MF_01351">
    <property type="entry name" value="NDH1_NuoI"/>
    <property type="match status" value="1"/>
</dbReference>
<dbReference type="InterPro" id="IPR017896">
    <property type="entry name" value="4Fe4S_Fe-S-bd"/>
</dbReference>
<dbReference type="InterPro" id="IPR017900">
    <property type="entry name" value="4Fe4S_Fe_S_CS"/>
</dbReference>
<dbReference type="InterPro" id="IPR010226">
    <property type="entry name" value="NADH_quinone_OxRdtase_chainI"/>
</dbReference>
<dbReference type="NCBIfam" id="TIGR01971">
    <property type="entry name" value="NuoI"/>
    <property type="match status" value="1"/>
</dbReference>
<dbReference type="NCBIfam" id="NF004538">
    <property type="entry name" value="PRK05888.1-4"/>
    <property type="match status" value="1"/>
</dbReference>
<dbReference type="NCBIfam" id="NF004539">
    <property type="entry name" value="PRK05888.1-5"/>
    <property type="match status" value="1"/>
</dbReference>
<dbReference type="PANTHER" id="PTHR10849:SF20">
    <property type="entry name" value="NADH DEHYDROGENASE [UBIQUINONE] IRON-SULFUR PROTEIN 8, MITOCHONDRIAL"/>
    <property type="match status" value="1"/>
</dbReference>
<dbReference type="PANTHER" id="PTHR10849">
    <property type="entry name" value="NADH DEHYDROGENASE UBIQUINONE IRON-SULFUR PROTEIN 8, MITOCHONDRIAL"/>
    <property type="match status" value="1"/>
</dbReference>
<dbReference type="Pfam" id="PF12838">
    <property type="entry name" value="Fer4_7"/>
    <property type="match status" value="1"/>
</dbReference>
<dbReference type="SUPFAM" id="SSF54862">
    <property type="entry name" value="4Fe-4S ferredoxins"/>
    <property type="match status" value="1"/>
</dbReference>
<dbReference type="PROSITE" id="PS00198">
    <property type="entry name" value="4FE4S_FER_1"/>
    <property type="match status" value="2"/>
</dbReference>
<dbReference type="PROSITE" id="PS51379">
    <property type="entry name" value="4FE4S_FER_2"/>
    <property type="match status" value="2"/>
</dbReference>
<proteinExistence type="inferred from homology"/>